<feature type="chain" id="PRO_0000344996" description="Dolichyldiphosphatase 1">
    <location>
        <begin position="1"/>
        <end position="238"/>
    </location>
</feature>
<feature type="transmembrane region" description="Helical" evidence="2">
    <location>
        <begin position="33"/>
        <end position="53"/>
    </location>
</feature>
<feature type="transmembrane region" description="Helical" evidence="2">
    <location>
        <begin position="100"/>
        <end position="120"/>
    </location>
</feature>
<feature type="transmembrane region" description="Helical" evidence="2">
    <location>
        <begin position="130"/>
        <end position="150"/>
    </location>
</feature>
<feature type="transmembrane region" description="Helical" evidence="2">
    <location>
        <begin position="162"/>
        <end position="182"/>
    </location>
</feature>
<keyword id="KW-0256">Endoplasmic reticulum</keyword>
<keyword id="KW-0378">Hydrolase</keyword>
<keyword id="KW-0472">Membrane</keyword>
<keyword id="KW-1185">Reference proteome</keyword>
<keyword id="KW-0812">Transmembrane</keyword>
<keyword id="KW-1133">Transmembrane helix</keyword>
<gene>
    <name type="primary">DOLPP1</name>
</gene>
<sequence length="238" mass="27064">MAADGQCSLPASWRPVTLTHVEYPAGDLSGHLLAYLSLSPVVIIVGFVTLIIFKRELHTISFLGGLVLNEGVNWLIKHVIQEPRPCGGPHPTVGTKYGMPSSHSQFMWFFSVYSFLFLYLRMHQTNNARFLDLLWRHVLSLGLLTAAFLVSYSRVYLLYHTWSQVLYGGVAGSLMAIAWFAFTQEVLTPLFPRIAAWPISEFFLIRDTSLIPNVLWFEYTVTRAEARNRQRKLGTKLQ</sequence>
<accession>B2KI79</accession>
<comment type="function">
    <text evidence="1">Required for efficient N-glycosylation. Necessary for maintaining optimal levels of dolichol-linked oligosaccharides. Hydrolyzes dolichyl pyrophosphate at a very high rate and dolichyl monophosphate at a much lower rate. Does not act on phosphatidate (By similarity).</text>
</comment>
<comment type="catalytic activity">
    <reaction>
        <text>a di-trans,poly-cis-dolichyl diphosphate + H2O = a di-trans,poly-cis-dolichyl phosphate + phosphate + H(+)</text>
        <dbReference type="Rhea" id="RHEA:14385"/>
        <dbReference type="Rhea" id="RHEA-COMP:19498"/>
        <dbReference type="Rhea" id="RHEA-COMP:19506"/>
        <dbReference type="ChEBI" id="CHEBI:15377"/>
        <dbReference type="ChEBI" id="CHEBI:15378"/>
        <dbReference type="ChEBI" id="CHEBI:43474"/>
        <dbReference type="ChEBI" id="CHEBI:57497"/>
        <dbReference type="ChEBI" id="CHEBI:57683"/>
        <dbReference type="EC" id="3.6.1.43"/>
    </reaction>
</comment>
<comment type="pathway">
    <text>Protein modification; protein glycosylation.</text>
</comment>
<comment type="subcellular location">
    <subcellularLocation>
        <location evidence="1">Endoplasmic reticulum membrane</location>
        <topology evidence="1">Multi-pass membrane protein</topology>
    </subcellularLocation>
</comment>
<comment type="similarity">
    <text evidence="3">Belongs to the dolichyldiphosphatase family.</text>
</comment>
<protein>
    <recommendedName>
        <fullName>Dolichyldiphosphatase 1</fullName>
        <ecNumber>3.6.1.43</ecNumber>
    </recommendedName>
    <alternativeName>
        <fullName>Dolichyl pyrophosphate phosphatase 1</fullName>
    </alternativeName>
</protein>
<evidence type="ECO:0000250" key="1"/>
<evidence type="ECO:0000255" key="2"/>
<evidence type="ECO:0000305" key="3"/>
<proteinExistence type="inferred from homology"/>
<dbReference type="EC" id="3.6.1.43"/>
<dbReference type="EMBL" id="DP000711">
    <property type="protein sequence ID" value="ACC64539.1"/>
    <property type="molecule type" value="Genomic_DNA"/>
</dbReference>
<dbReference type="RefSeq" id="XP_032979758.1">
    <property type="nucleotide sequence ID" value="XM_033123867.1"/>
</dbReference>
<dbReference type="FunCoup" id="B2KI79">
    <property type="interactions" value="1710"/>
</dbReference>
<dbReference type="Ensembl" id="ENSRFET00010035446.1">
    <property type="protein sequence ID" value="ENSRFEP00010032727.1"/>
    <property type="gene ID" value="ENSRFEG00010021538.1"/>
</dbReference>
<dbReference type="GeneID" id="117032375"/>
<dbReference type="GeneTree" id="ENSGT00390000013112"/>
<dbReference type="InParanoid" id="B2KI79"/>
<dbReference type="OMA" id="VYATLIW"/>
<dbReference type="OrthoDB" id="302705at2759"/>
<dbReference type="UniPathway" id="UPA00378"/>
<dbReference type="Proteomes" id="UP000472240">
    <property type="component" value="Chromosome 12"/>
</dbReference>
<dbReference type="GO" id="GO:0005789">
    <property type="term" value="C:endoplasmic reticulum membrane"/>
    <property type="evidence" value="ECO:0007669"/>
    <property type="project" value="UniProtKB-SubCell"/>
</dbReference>
<dbReference type="GO" id="GO:0047874">
    <property type="term" value="F:dolichyldiphosphatase activity"/>
    <property type="evidence" value="ECO:0007669"/>
    <property type="project" value="UniProtKB-EC"/>
</dbReference>
<dbReference type="GO" id="GO:0008610">
    <property type="term" value="P:lipid biosynthetic process"/>
    <property type="evidence" value="ECO:0007669"/>
    <property type="project" value="TreeGrafter"/>
</dbReference>
<dbReference type="GO" id="GO:0006487">
    <property type="term" value="P:protein N-linked glycosylation"/>
    <property type="evidence" value="ECO:0007669"/>
    <property type="project" value="Ensembl"/>
</dbReference>
<dbReference type="CDD" id="cd03382">
    <property type="entry name" value="PAP2_dolichyldiphosphatase"/>
    <property type="match status" value="1"/>
</dbReference>
<dbReference type="FunFam" id="1.20.144.10:FF:000003">
    <property type="entry name" value="Dolichyldiphosphatase 1"/>
    <property type="match status" value="1"/>
</dbReference>
<dbReference type="Gene3D" id="1.20.144.10">
    <property type="entry name" value="Phosphatidic acid phosphatase type 2/haloperoxidase"/>
    <property type="match status" value="1"/>
</dbReference>
<dbReference type="InterPro" id="IPR039667">
    <property type="entry name" value="Dolichyldiphosphatase_PAP2"/>
</dbReference>
<dbReference type="InterPro" id="IPR036938">
    <property type="entry name" value="P_Acid_Pase_2/haloperoxi_sf"/>
</dbReference>
<dbReference type="InterPro" id="IPR000326">
    <property type="entry name" value="P_Acid_Pase_2/haloperoxidase"/>
</dbReference>
<dbReference type="PANTHER" id="PTHR11247:SF1">
    <property type="entry name" value="DOLICHYLDIPHOSPHATASE 1"/>
    <property type="match status" value="1"/>
</dbReference>
<dbReference type="PANTHER" id="PTHR11247">
    <property type="entry name" value="PALMITOYL-PROTEIN THIOESTERASE/DOLICHYLDIPHOSPHATASE 1"/>
    <property type="match status" value="1"/>
</dbReference>
<dbReference type="Pfam" id="PF01569">
    <property type="entry name" value="PAP2"/>
    <property type="match status" value="1"/>
</dbReference>
<dbReference type="SMART" id="SM00014">
    <property type="entry name" value="acidPPc"/>
    <property type="match status" value="1"/>
</dbReference>
<dbReference type="SUPFAM" id="SSF48317">
    <property type="entry name" value="Acid phosphatase/Vanadium-dependent haloperoxidase"/>
    <property type="match status" value="1"/>
</dbReference>
<reference key="1">
    <citation type="submission" date="2008-04" db="EMBL/GenBank/DDBJ databases">
        <title>NISC comparative sequencing initiative.</title>
        <authorList>
            <person name="Antonellis A."/>
            <person name="Benjamin B."/>
            <person name="Blakesley R.W."/>
            <person name="Bouffard G.G."/>
            <person name="Brinkley C."/>
            <person name="Brooks S."/>
            <person name="Chu G."/>
            <person name="Chub I."/>
            <person name="Coleman H."/>
            <person name="Fuksenko T."/>
            <person name="Gestole M."/>
            <person name="Gregory M."/>
            <person name="Guan X."/>
            <person name="Gupta J."/>
            <person name="Gurson N."/>
            <person name="Han E."/>
            <person name="Han J."/>
            <person name="Hansen N."/>
            <person name="Hargrove A."/>
            <person name="Hines-Harris K."/>
            <person name="Ho S.-L."/>
            <person name="Hu P."/>
            <person name="Hunter G."/>
            <person name="Hurle B."/>
            <person name="Idol J.R."/>
            <person name="Johnson T."/>
            <person name="Knight E."/>
            <person name="Kwong P."/>
            <person name="Lee-Lin S.-Q."/>
            <person name="Legaspi R."/>
            <person name="Madden M."/>
            <person name="Maduro Q.L."/>
            <person name="Maduro V.B."/>
            <person name="Margulies E.H."/>
            <person name="Masiello C."/>
            <person name="Maskeri B."/>
            <person name="McDowell J."/>
            <person name="Merkulov G."/>
            <person name="Montemayor C."/>
            <person name="Mullikin J.C."/>
            <person name="Park M."/>
            <person name="Prasad A."/>
            <person name="Ramsahoye C."/>
            <person name="Reddix-Dugue N."/>
            <person name="Riebow N."/>
            <person name="Schandler K."/>
            <person name="Schueler M.G."/>
            <person name="Sison C."/>
            <person name="Smith L."/>
            <person name="Stantripop S."/>
            <person name="Thomas J.W."/>
            <person name="Thomas P.J."/>
            <person name="Tsipouri V."/>
            <person name="Young A."/>
            <person name="Green E.D."/>
        </authorList>
    </citation>
    <scope>NUCLEOTIDE SEQUENCE [LARGE SCALE GENOMIC DNA]</scope>
</reference>
<organism>
    <name type="scientific">Rhinolophus ferrumequinum</name>
    <name type="common">Greater horseshoe bat</name>
    <dbReference type="NCBI Taxonomy" id="59479"/>
    <lineage>
        <taxon>Eukaryota</taxon>
        <taxon>Metazoa</taxon>
        <taxon>Chordata</taxon>
        <taxon>Craniata</taxon>
        <taxon>Vertebrata</taxon>
        <taxon>Euteleostomi</taxon>
        <taxon>Mammalia</taxon>
        <taxon>Eutheria</taxon>
        <taxon>Laurasiatheria</taxon>
        <taxon>Chiroptera</taxon>
        <taxon>Yinpterochiroptera</taxon>
        <taxon>Rhinolophoidea</taxon>
        <taxon>Rhinolophidae</taxon>
        <taxon>Rhinolophinae</taxon>
        <taxon>Rhinolophus</taxon>
    </lineage>
</organism>
<name>DOPP1_RHIFE</name>